<accession>Q12KL3</accession>
<protein>
    <recommendedName>
        <fullName evidence="2">Transaldolase</fullName>
        <ecNumber evidence="2">2.2.1.2</ecNumber>
    </recommendedName>
</protein>
<reference key="1">
    <citation type="submission" date="2006-03" db="EMBL/GenBank/DDBJ databases">
        <title>Complete sequence of Shewanella denitrificans OS217.</title>
        <authorList>
            <consortium name="US DOE Joint Genome Institute"/>
            <person name="Copeland A."/>
            <person name="Lucas S."/>
            <person name="Lapidus A."/>
            <person name="Barry K."/>
            <person name="Detter J.C."/>
            <person name="Glavina del Rio T."/>
            <person name="Hammon N."/>
            <person name="Israni S."/>
            <person name="Dalin E."/>
            <person name="Tice H."/>
            <person name="Pitluck S."/>
            <person name="Brettin T."/>
            <person name="Bruce D."/>
            <person name="Han C."/>
            <person name="Tapia R."/>
            <person name="Gilna P."/>
            <person name="Kiss H."/>
            <person name="Schmutz J."/>
            <person name="Larimer F."/>
            <person name="Land M."/>
            <person name="Hauser L."/>
            <person name="Kyrpides N."/>
            <person name="Lykidis A."/>
            <person name="Richardson P."/>
        </authorList>
    </citation>
    <scope>NUCLEOTIDE SEQUENCE [LARGE SCALE GENOMIC DNA]</scope>
    <source>
        <strain>OS217 / ATCC BAA-1090 / DSM 15013</strain>
    </source>
</reference>
<sequence>MANTLAQLKSLTTIVADTGDIEAIKRYQPQDATTNPSLILKASQIPEYAPYIDQAIAWAKTQSNDVAQQIEDAGDKLAVTIGVEILKYVPGRMSTEVDARLSFDKQKSIDKAHKLIKLYQEAGIDKSRILIKLASTWEGICAAKELEQEGINCNLTLLFSFAQARACAEAGVYLVSPFVGRILDWYKKDTGQDYTAETDPGVISVTEIYNYYKQHGHNTVVMGASFRNTGEIIELAGCDRLTIGPALLEELANSDQLVVQKLKPALTQTAAPAPMSEAEFRWDFNEDAMAVDKLAEGIRNFAIDQGKLEVMLKAKLA</sequence>
<organism>
    <name type="scientific">Shewanella denitrificans (strain OS217 / ATCC BAA-1090 / DSM 15013)</name>
    <dbReference type="NCBI Taxonomy" id="318161"/>
    <lineage>
        <taxon>Bacteria</taxon>
        <taxon>Pseudomonadati</taxon>
        <taxon>Pseudomonadota</taxon>
        <taxon>Gammaproteobacteria</taxon>
        <taxon>Alteromonadales</taxon>
        <taxon>Shewanellaceae</taxon>
        <taxon>Shewanella</taxon>
    </lineage>
</organism>
<keyword id="KW-0963">Cytoplasm</keyword>
<keyword id="KW-0570">Pentose shunt</keyword>
<keyword id="KW-1185">Reference proteome</keyword>
<keyword id="KW-0704">Schiff base</keyword>
<keyword id="KW-0808">Transferase</keyword>
<feature type="chain" id="PRO_1000014523" description="Transaldolase">
    <location>
        <begin position="1"/>
        <end position="317"/>
    </location>
</feature>
<feature type="active site" description="Schiff-base intermediate with substrate" evidence="2">
    <location>
        <position position="132"/>
    </location>
</feature>
<evidence type="ECO:0000250" key="1"/>
<evidence type="ECO:0000255" key="2">
    <source>
        <dbReference type="HAMAP-Rule" id="MF_00492"/>
    </source>
</evidence>
<name>TAL_SHEDO</name>
<proteinExistence type="inferred from homology"/>
<gene>
    <name evidence="2" type="primary">tal</name>
    <name type="ordered locus">Sden_2734</name>
</gene>
<dbReference type="EC" id="2.2.1.2" evidence="2"/>
<dbReference type="EMBL" id="CP000302">
    <property type="protein sequence ID" value="ABE56013.1"/>
    <property type="molecule type" value="Genomic_DNA"/>
</dbReference>
<dbReference type="RefSeq" id="WP_011497163.1">
    <property type="nucleotide sequence ID" value="NC_007954.1"/>
</dbReference>
<dbReference type="SMR" id="Q12KL3"/>
<dbReference type="STRING" id="318161.Sden_2734"/>
<dbReference type="KEGG" id="sdn:Sden_2734"/>
<dbReference type="eggNOG" id="COG0176">
    <property type="taxonomic scope" value="Bacteria"/>
</dbReference>
<dbReference type="HOGENOM" id="CLU_047470_0_1_6"/>
<dbReference type="OrthoDB" id="9809101at2"/>
<dbReference type="UniPathway" id="UPA00115">
    <property type="reaction ID" value="UER00414"/>
</dbReference>
<dbReference type="Proteomes" id="UP000001982">
    <property type="component" value="Chromosome"/>
</dbReference>
<dbReference type="GO" id="GO:0005829">
    <property type="term" value="C:cytosol"/>
    <property type="evidence" value="ECO:0007669"/>
    <property type="project" value="TreeGrafter"/>
</dbReference>
<dbReference type="GO" id="GO:0004801">
    <property type="term" value="F:transaldolase activity"/>
    <property type="evidence" value="ECO:0000250"/>
    <property type="project" value="UniProtKB"/>
</dbReference>
<dbReference type="GO" id="GO:0005975">
    <property type="term" value="P:carbohydrate metabolic process"/>
    <property type="evidence" value="ECO:0007669"/>
    <property type="project" value="InterPro"/>
</dbReference>
<dbReference type="GO" id="GO:0006098">
    <property type="term" value="P:pentose-phosphate shunt"/>
    <property type="evidence" value="ECO:0007669"/>
    <property type="project" value="UniProtKB-UniRule"/>
</dbReference>
<dbReference type="CDD" id="cd00957">
    <property type="entry name" value="Transaldolase_TalAB"/>
    <property type="match status" value="1"/>
</dbReference>
<dbReference type="FunFam" id="3.20.20.70:FF:000002">
    <property type="entry name" value="Transaldolase"/>
    <property type="match status" value="1"/>
</dbReference>
<dbReference type="Gene3D" id="3.20.20.70">
    <property type="entry name" value="Aldolase class I"/>
    <property type="match status" value="1"/>
</dbReference>
<dbReference type="HAMAP" id="MF_00492">
    <property type="entry name" value="Transaldolase_1"/>
    <property type="match status" value="1"/>
</dbReference>
<dbReference type="InterPro" id="IPR013785">
    <property type="entry name" value="Aldolase_TIM"/>
</dbReference>
<dbReference type="InterPro" id="IPR001585">
    <property type="entry name" value="TAL/FSA"/>
</dbReference>
<dbReference type="InterPro" id="IPR004730">
    <property type="entry name" value="Transaldolase_1"/>
</dbReference>
<dbReference type="InterPro" id="IPR018225">
    <property type="entry name" value="Transaldolase_AS"/>
</dbReference>
<dbReference type="NCBIfam" id="NF009001">
    <property type="entry name" value="PRK12346.1"/>
    <property type="match status" value="1"/>
</dbReference>
<dbReference type="NCBIfam" id="TIGR00874">
    <property type="entry name" value="talAB"/>
    <property type="match status" value="1"/>
</dbReference>
<dbReference type="PANTHER" id="PTHR10683">
    <property type="entry name" value="TRANSALDOLASE"/>
    <property type="match status" value="1"/>
</dbReference>
<dbReference type="PANTHER" id="PTHR10683:SF18">
    <property type="entry name" value="TRANSALDOLASE"/>
    <property type="match status" value="1"/>
</dbReference>
<dbReference type="Pfam" id="PF00923">
    <property type="entry name" value="TAL_FSA"/>
    <property type="match status" value="1"/>
</dbReference>
<dbReference type="SUPFAM" id="SSF51569">
    <property type="entry name" value="Aldolase"/>
    <property type="match status" value="1"/>
</dbReference>
<dbReference type="PROSITE" id="PS01054">
    <property type="entry name" value="TRANSALDOLASE_1"/>
    <property type="match status" value="1"/>
</dbReference>
<dbReference type="PROSITE" id="PS00958">
    <property type="entry name" value="TRANSALDOLASE_2"/>
    <property type="match status" value="1"/>
</dbReference>
<comment type="function">
    <text evidence="2">Transaldolase is important for the balance of metabolites in the pentose-phosphate pathway.</text>
</comment>
<comment type="catalytic activity">
    <reaction evidence="2">
        <text>D-sedoheptulose 7-phosphate + D-glyceraldehyde 3-phosphate = D-erythrose 4-phosphate + beta-D-fructose 6-phosphate</text>
        <dbReference type="Rhea" id="RHEA:17053"/>
        <dbReference type="ChEBI" id="CHEBI:16897"/>
        <dbReference type="ChEBI" id="CHEBI:57483"/>
        <dbReference type="ChEBI" id="CHEBI:57634"/>
        <dbReference type="ChEBI" id="CHEBI:59776"/>
        <dbReference type="EC" id="2.2.1.2"/>
    </reaction>
</comment>
<comment type="pathway">
    <text evidence="2">Carbohydrate degradation; pentose phosphate pathway; D-glyceraldehyde 3-phosphate and beta-D-fructose 6-phosphate from D-ribose 5-phosphate and D-xylulose 5-phosphate (non-oxidative stage): step 2/3.</text>
</comment>
<comment type="subunit">
    <text evidence="1">Homodimer.</text>
</comment>
<comment type="subcellular location">
    <subcellularLocation>
        <location evidence="2">Cytoplasm</location>
    </subcellularLocation>
</comment>
<comment type="similarity">
    <text evidence="2">Belongs to the transaldolase family. Type 1 subfamily.</text>
</comment>